<sequence length="54" mass="5745">MLHYSVVFLVIALIAAVFGFGGIAAGAVEIAKILFFLFAIMAIVSFVVSLIKKN</sequence>
<dbReference type="EMBL" id="CP000529">
    <property type="protein sequence ID" value="ABM36237.1"/>
    <property type="molecule type" value="Genomic_DNA"/>
</dbReference>
<dbReference type="STRING" id="365044.Pnap_0920"/>
<dbReference type="KEGG" id="pna:Pnap_0920"/>
<dbReference type="eggNOG" id="COG5487">
    <property type="taxonomic scope" value="Bacteria"/>
</dbReference>
<dbReference type="HOGENOM" id="CLU_187346_0_1_4"/>
<dbReference type="Proteomes" id="UP000000644">
    <property type="component" value="Chromosome"/>
</dbReference>
<dbReference type="GO" id="GO:0005886">
    <property type="term" value="C:plasma membrane"/>
    <property type="evidence" value="ECO:0007669"/>
    <property type="project" value="UniProtKB-SubCell"/>
</dbReference>
<dbReference type="HAMAP" id="MF_01361">
    <property type="entry name" value="UPF0391"/>
    <property type="match status" value="1"/>
</dbReference>
<dbReference type="InterPro" id="IPR009760">
    <property type="entry name" value="DUF1328"/>
</dbReference>
<dbReference type="NCBIfam" id="NF010226">
    <property type="entry name" value="PRK13682.1-1"/>
    <property type="match status" value="1"/>
</dbReference>
<dbReference type="NCBIfam" id="NF010229">
    <property type="entry name" value="PRK13682.1-4"/>
    <property type="match status" value="1"/>
</dbReference>
<dbReference type="Pfam" id="PF07043">
    <property type="entry name" value="DUF1328"/>
    <property type="match status" value="1"/>
</dbReference>
<dbReference type="PIRSF" id="PIRSF036466">
    <property type="entry name" value="UCP036466"/>
    <property type="match status" value="1"/>
</dbReference>
<protein>
    <recommendedName>
        <fullName evidence="1">UPF0391 membrane protein Pnap_0920</fullName>
    </recommendedName>
</protein>
<evidence type="ECO:0000255" key="1">
    <source>
        <dbReference type="HAMAP-Rule" id="MF_01361"/>
    </source>
</evidence>
<comment type="subcellular location">
    <subcellularLocation>
        <location evidence="1">Cell membrane</location>
        <topology evidence="1">Multi-pass membrane protein</topology>
    </subcellularLocation>
</comment>
<comment type="similarity">
    <text evidence="1">Belongs to the UPF0391 family.</text>
</comment>
<proteinExistence type="inferred from homology"/>
<gene>
    <name type="ordered locus">Pnap_0920</name>
</gene>
<feature type="chain" id="PRO_5000210840" description="UPF0391 membrane protein Pnap_0920">
    <location>
        <begin position="1"/>
        <end position="54"/>
    </location>
</feature>
<feature type="transmembrane region" description="Helical" evidence="1">
    <location>
        <begin position="6"/>
        <end position="26"/>
    </location>
</feature>
<feature type="transmembrane region" description="Helical" evidence="1">
    <location>
        <begin position="30"/>
        <end position="50"/>
    </location>
</feature>
<keyword id="KW-1003">Cell membrane</keyword>
<keyword id="KW-0472">Membrane</keyword>
<keyword id="KW-1185">Reference proteome</keyword>
<keyword id="KW-0812">Transmembrane</keyword>
<keyword id="KW-1133">Transmembrane helix</keyword>
<reference key="1">
    <citation type="journal article" date="2009" name="Environ. Microbiol.">
        <title>The genome of Polaromonas naphthalenivorans strain CJ2, isolated from coal tar-contaminated sediment, reveals physiological and metabolic versatility and evolution through extensive horizontal gene transfer.</title>
        <authorList>
            <person name="Yagi J.M."/>
            <person name="Sims D."/>
            <person name="Brettin T."/>
            <person name="Bruce D."/>
            <person name="Madsen E.L."/>
        </authorList>
    </citation>
    <scope>NUCLEOTIDE SEQUENCE [LARGE SCALE GENOMIC DNA]</scope>
    <source>
        <strain>CJ2</strain>
    </source>
</reference>
<organism>
    <name type="scientific">Polaromonas naphthalenivorans (strain CJ2)</name>
    <dbReference type="NCBI Taxonomy" id="365044"/>
    <lineage>
        <taxon>Bacteria</taxon>
        <taxon>Pseudomonadati</taxon>
        <taxon>Pseudomonadota</taxon>
        <taxon>Betaproteobacteria</taxon>
        <taxon>Burkholderiales</taxon>
        <taxon>Comamonadaceae</taxon>
        <taxon>Polaromonas</taxon>
    </lineage>
</organism>
<name>Y920_POLNA</name>
<accession>A1VKQ9</accession>